<accession>P68960</accession>
<accession>P22228</accession>
<name>E313_ADECG</name>
<proteinExistence type="predicted"/>
<reference key="1">
    <citation type="journal article" date="1991" name="Virology">
        <title>Sequence analysis of putative E3 and fiber genomic regions of two strains of canine adenovirus type 1.</title>
        <authorList>
            <person name="Dragulev B.P."/>
            <person name="Sira S."/>
            <person name="Abouhaidar M.G."/>
            <person name="Campbell J.B."/>
        </authorList>
    </citation>
    <scope>NUCLEOTIDE SEQUENCE [GENOMIC DNA]</scope>
</reference>
<feature type="chain" id="PRO_0000221764" description="Early E3 13.3 kDa protein">
    <location>
        <begin position="1"/>
        <end position="117"/>
    </location>
</feature>
<protein>
    <recommendedName>
        <fullName>Early E3 13.3 kDa protein</fullName>
    </recommendedName>
</protein>
<dbReference type="EMBL" id="M60937">
    <property type="protein sequence ID" value="AAA42534.1"/>
    <property type="molecule type" value="Genomic_DNA"/>
</dbReference>
<dbReference type="PIR" id="B40318">
    <property type="entry name" value="ERADD1"/>
</dbReference>
<dbReference type="RefSeq" id="AP_000066.1">
    <property type="nucleotide sequence ID" value="AC_000003.1"/>
</dbReference>
<sequence>MAMTEESVDQVEVNCLCVQHGQSCNNTRCFVKEGLRANWFYNPVLEEFAIPDSYQEGHGVNVKITFSHRSRNLRHNGHDVICSYSHLGSHISIRCTCNKPRPHLSLIEAACSMYNLD</sequence>
<organism>
    <name type="scientific">Canine adenovirus serotype 1 (strain Glaxo)</name>
    <name type="common">CAdV-1</name>
    <name type="synonym">Canine adenovirus 1 (strain Glaxo)</name>
    <dbReference type="NCBI Taxonomy" id="10513"/>
    <lineage>
        <taxon>Viruses</taxon>
        <taxon>Varidnaviria</taxon>
        <taxon>Bamfordvirae</taxon>
        <taxon>Preplasmiviricota</taxon>
        <taxon>Tectiliviricetes</taxon>
        <taxon>Rowavirales</taxon>
        <taxon>Adenoviridae</taxon>
        <taxon>Mastadenovirus</taxon>
        <taxon>Canine mastadenovirus A</taxon>
    </lineage>
</organism>
<keyword id="KW-0244">Early protein</keyword>
<organismHost>
    <name type="scientific">Canis lupus familiaris</name>
    <name type="common">Dog</name>
    <name type="synonym">Canis familiaris</name>
    <dbReference type="NCBI Taxonomy" id="9615"/>
</organismHost>